<name>YP080_YEAST</name>
<reference key="1">
    <citation type="journal article" date="1997" name="Nature">
        <title>The nucleotide sequence of Saccharomyces cerevisiae chromosome XVI.</title>
        <authorList>
            <person name="Bussey H."/>
            <person name="Storms R.K."/>
            <person name="Ahmed A."/>
            <person name="Albermann K."/>
            <person name="Allen E."/>
            <person name="Ansorge W."/>
            <person name="Araujo R."/>
            <person name="Aparicio A."/>
            <person name="Barrell B.G."/>
            <person name="Badcock K."/>
            <person name="Benes V."/>
            <person name="Botstein D."/>
            <person name="Bowman S."/>
            <person name="Brueckner M."/>
            <person name="Carpenter J."/>
            <person name="Cherry J.M."/>
            <person name="Chung E."/>
            <person name="Churcher C.M."/>
            <person name="Coster F."/>
            <person name="Davis K."/>
            <person name="Davis R.W."/>
            <person name="Dietrich F.S."/>
            <person name="Delius H."/>
            <person name="DiPaolo T."/>
            <person name="Dubois E."/>
            <person name="Duesterhoeft A."/>
            <person name="Duncan M."/>
            <person name="Floeth M."/>
            <person name="Fortin N."/>
            <person name="Friesen J.D."/>
            <person name="Fritz C."/>
            <person name="Goffeau A."/>
            <person name="Hall J."/>
            <person name="Hebling U."/>
            <person name="Heumann K."/>
            <person name="Hilbert H."/>
            <person name="Hillier L.W."/>
            <person name="Hunicke-Smith S."/>
            <person name="Hyman R.W."/>
            <person name="Johnston M."/>
            <person name="Kalman S."/>
            <person name="Kleine K."/>
            <person name="Komp C."/>
            <person name="Kurdi O."/>
            <person name="Lashkari D."/>
            <person name="Lew H."/>
            <person name="Lin A."/>
            <person name="Lin D."/>
            <person name="Louis E.J."/>
            <person name="Marathe R."/>
            <person name="Messenguy F."/>
            <person name="Mewes H.-W."/>
            <person name="Mirtipati S."/>
            <person name="Moestl D."/>
            <person name="Mueller-Auer S."/>
            <person name="Namath A."/>
            <person name="Nentwich U."/>
            <person name="Oefner P."/>
            <person name="Pearson D."/>
            <person name="Petel F.X."/>
            <person name="Pohl T.M."/>
            <person name="Purnelle B."/>
            <person name="Rajandream M.A."/>
            <person name="Rechmann S."/>
            <person name="Rieger M."/>
            <person name="Riles L."/>
            <person name="Roberts D."/>
            <person name="Schaefer M."/>
            <person name="Scharfe M."/>
            <person name="Scherens B."/>
            <person name="Schramm S."/>
            <person name="Schroeder M."/>
            <person name="Sdicu A.-M."/>
            <person name="Tettelin H."/>
            <person name="Urrestarazu L.A."/>
            <person name="Ushinsky S."/>
            <person name="Vierendeels F."/>
            <person name="Vissers S."/>
            <person name="Voss H."/>
            <person name="Walsh S.V."/>
            <person name="Wambutt R."/>
            <person name="Wang Y."/>
            <person name="Wedler E."/>
            <person name="Wedler H."/>
            <person name="Winnett E."/>
            <person name="Zhong W.-W."/>
            <person name="Zollner A."/>
            <person name="Vo D.H."/>
            <person name="Hani J."/>
        </authorList>
    </citation>
    <scope>NUCLEOTIDE SEQUENCE [LARGE SCALE GENOMIC DNA]</scope>
    <source>
        <strain>ATCC 204508 / S288c</strain>
    </source>
</reference>
<reference key="2">
    <citation type="journal article" date="2014" name="G3 (Bethesda)">
        <title>The reference genome sequence of Saccharomyces cerevisiae: Then and now.</title>
        <authorList>
            <person name="Engel S.R."/>
            <person name="Dietrich F.S."/>
            <person name="Fisk D.G."/>
            <person name="Binkley G."/>
            <person name="Balakrishnan R."/>
            <person name="Costanzo M.C."/>
            <person name="Dwight S.S."/>
            <person name="Hitz B.C."/>
            <person name="Karra K."/>
            <person name="Nash R.S."/>
            <person name="Weng S."/>
            <person name="Wong E.D."/>
            <person name="Lloyd P."/>
            <person name="Skrzypek M.S."/>
            <person name="Miyasato S.R."/>
            <person name="Simison M."/>
            <person name="Cherry J.M."/>
        </authorList>
    </citation>
    <scope>GENOME REANNOTATION</scope>
    <source>
        <strain>ATCC 204508 / S288c</strain>
    </source>
</reference>
<reference key="3">
    <citation type="journal article" date="2007" name="Genome Res.">
        <title>Approaching a complete repository of sequence-verified protein-encoding clones for Saccharomyces cerevisiae.</title>
        <authorList>
            <person name="Hu Y."/>
            <person name="Rolfs A."/>
            <person name="Bhullar B."/>
            <person name="Murthy T.V.S."/>
            <person name="Zhu C."/>
            <person name="Berger M.F."/>
            <person name="Camargo A.A."/>
            <person name="Kelley F."/>
            <person name="McCarron S."/>
            <person name="Jepson D."/>
            <person name="Richardson A."/>
            <person name="Raphael J."/>
            <person name="Moreira D."/>
            <person name="Taycher E."/>
            <person name="Zuo D."/>
            <person name="Mohr S."/>
            <person name="Kane M.F."/>
            <person name="Williamson J."/>
            <person name="Simpson A.J.G."/>
            <person name="Bulyk M.L."/>
            <person name="Harlow E."/>
            <person name="Marsischky G."/>
            <person name="Kolodner R.D."/>
            <person name="LaBaer J."/>
        </authorList>
    </citation>
    <scope>NUCLEOTIDE SEQUENCE [GENOMIC DNA]</scope>
    <source>
        <strain>ATCC 204508 / S288c</strain>
    </source>
</reference>
<protein>
    <recommendedName>
        <fullName>Uncharacterized protein YPL080C</fullName>
    </recommendedName>
</protein>
<feature type="chain" id="PRO_0000299801" description="Uncharacterized protein YPL080C">
    <location>
        <begin position="1"/>
        <end position="108"/>
    </location>
</feature>
<organism>
    <name type="scientific">Saccharomyces cerevisiae (strain ATCC 204508 / S288c)</name>
    <name type="common">Baker's yeast</name>
    <dbReference type="NCBI Taxonomy" id="559292"/>
    <lineage>
        <taxon>Eukaryota</taxon>
        <taxon>Fungi</taxon>
        <taxon>Dikarya</taxon>
        <taxon>Ascomycota</taxon>
        <taxon>Saccharomycotina</taxon>
        <taxon>Saccharomycetes</taxon>
        <taxon>Saccharomycetales</taxon>
        <taxon>Saccharomycetaceae</taxon>
        <taxon>Saccharomyces</taxon>
    </lineage>
</organism>
<proteinExistence type="predicted"/>
<gene>
    <name type="ordered locus">YPL080C</name>
    <name type="ORF">LPF5</name>
</gene>
<sequence>MDGSYLTHRYCALKRPYTAHLLLLDFSKDEVTKNVWRWKGTDVKLHKMGRKSIVAAVYNQAHPSHPPLYHLGNLNGDKYVASPPSRMKAVSLSFAFTFLYYYFPLPTN</sequence>
<keyword id="KW-1185">Reference proteome</keyword>
<dbReference type="EMBL" id="U41849">
    <property type="protein sequence ID" value="AAB68258.1"/>
    <property type="molecule type" value="Genomic_DNA"/>
</dbReference>
<dbReference type="EMBL" id="AY558336">
    <property type="protein sequence ID" value="AAS56662.1"/>
    <property type="molecule type" value="Genomic_DNA"/>
</dbReference>
<dbReference type="EMBL" id="BK006949">
    <property type="protein sequence ID" value="DAA80342.1"/>
    <property type="molecule type" value="Genomic_DNA"/>
</dbReference>
<dbReference type="PIR" id="S61107">
    <property type="entry name" value="S61107"/>
</dbReference>
<dbReference type="RefSeq" id="NP_001335822.1">
    <property type="nucleotide sequence ID" value="NM_001348884.1"/>
</dbReference>
<dbReference type="FunCoup" id="Q02826">
    <property type="interactions" value="23"/>
</dbReference>
<dbReference type="PaxDb" id="4932-YPL080C"/>
<dbReference type="EnsemblFungi" id="YPL080C_mRNA">
    <property type="protein sequence ID" value="YPL080C"/>
    <property type="gene ID" value="YPL080C"/>
</dbReference>
<dbReference type="GeneID" id="856025"/>
<dbReference type="AGR" id="SGD:S000006001"/>
<dbReference type="SGD" id="S000006001">
    <property type="gene designation" value="YPL080C"/>
</dbReference>
<dbReference type="HOGENOM" id="CLU_2199052_0_0_1"/>
<dbReference type="InParanoid" id="Q02826"/>
<dbReference type="PRO" id="PR:Q02826"/>
<dbReference type="Proteomes" id="UP000002311">
    <property type="component" value="Chromosome XVI"/>
</dbReference>
<dbReference type="RNAct" id="Q02826">
    <property type="molecule type" value="protein"/>
</dbReference>
<accession>Q02826</accession>
<accession>A0A1S0T0D1</accession>